<comment type="function">
    <text evidence="1">Has a role in a nucleosome assembly pathway that is required for the integrity of heterochromatin and proper chromosome segregation.</text>
</comment>
<comment type="subcellular location">
    <subcellularLocation>
        <location evidence="1">Nucleus</location>
    </subcellularLocation>
</comment>
<comment type="similarity">
    <text evidence="3">Belongs to the HIR3 family.</text>
</comment>
<gene>
    <name type="primary">HIR3</name>
    <name type="ORF">CHGG_04295</name>
</gene>
<feature type="chain" id="PRO_0000256198" description="Histone transcription regulator 3 homolog">
    <location>
        <begin position="1"/>
        <end position="1982"/>
    </location>
</feature>
<feature type="region of interest" description="Disordered" evidence="2">
    <location>
        <begin position="333"/>
        <end position="427"/>
    </location>
</feature>
<feature type="region of interest" description="Disordered" evidence="2">
    <location>
        <begin position="1688"/>
        <end position="1776"/>
    </location>
</feature>
<feature type="region of interest" description="Disordered" evidence="2">
    <location>
        <begin position="1791"/>
        <end position="1982"/>
    </location>
</feature>
<feature type="compositionally biased region" description="Acidic residues" evidence="2">
    <location>
        <begin position="348"/>
        <end position="365"/>
    </location>
</feature>
<feature type="compositionally biased region" description="Polar residues" evidence="2">
    <location>
        <begin position="377"/>
        <end position="393"/>
    </location>
</feature>
<feature type="compositionally biased region" description="Basic and acidic residues" evidence="2">
    <location>
        <begin position="1688"/>
        <end position="1705"/>
    </location>
</feature>
<feature type="compositionally biased region" description="Polar residues" evidence="2">
    <location>
        <begin position="1706"/>
        <end position="1715"/>
    </location>
</feature>
<feature type="compositionally biased region" description="Polar residues" evidence="2">
    <location>
        <begin position="1732"/>
        <end position="1742"/>
    </location>
</feature>
<feature type="compositionally biased region" description="Basic and acidic residues" evidence="2">
    <location>
        <begin position="1743"/>
        <end position="1754"/>
    </location>
</feature>
<feature type="compositionally biased region" description="Low complexity" evidence="2">
    <location>
        <begin position="1755"/>
        <end position="1765"/>
    </location>
</feature>
<feature type="compositionally biased region" description="Gly residues" evidence="2">
    <location>
        <begin position="1801"/>
        <end position="1810"/>
    </location>
</feature>
<feature type="compositionally biased region" description="Acidic residues" evidence="2">
    <location>
        <begin position="1832"/>
        <end position="1847"/>
    </location>
</feature>
<feature type="compositionally biased region" description="Acidic residues" evidence="2">
    <location>
        <begin position="1885"/>
        <end position="1896"/>
    </location>
</feature>
<feature type="compositionally biased region" description="Basic and acidic residues" evidence="2">
    <location>
        <begin position="1897"/>
        <end position="1906"/>
    </location>
</feature>
<feature type="compositionally biased region" description="Acidic residues" evidence="2">
    <location>
        <begin position="1907"/>
        <end position="1953"/>
    </location>
</feature>
<feature type="compositionally biased region" description="Acidic residues" evidence="2">
    <location>
        <begin position="1965"/>
        <end position="1982"/>
    </location>
</feature>
<proteinExistence type="inferred from homology"/>
<organism>
    <name type="scientific">Chaetomium globosum (strain ATCC 6205 / CBS 148.51 / DSM 1962 / NBRC 6347 / NRRL 1970)</name>
    <name type="common">Soil fungus</name>
    <dbReference type="NCBI Taxonomy" id="306901"/>
    <lineage>
        <taxon>Eukaryota</taxon>
        <taxon>Fungi</taxon>
        <taxon>Dikarya</taxon>
        <taxon>Ascomycota</taxon>
        <taxon>Pezizomycotina</taxon>
        <taxon>Sordariomycetes</taxon>
        <taxon>Sordariomycetidae</taxon>
        <taxon>Sordariales</taxon>
        <taxon>Chaetomiaceae</taxon>
        <taxon>Chaetomium</taxon>
    </lineage>
</organism>
<dbReference type="EMBL" id="CH408032">
    <property type="protein sequence ID" value="EAQ87676.1"/>
    <property type="molecule type" value="Genomic_DNA"/>
</dbReference>
<dbReference type="RefSeq" id="XP_001223509.1">
    <property type="nucleotide sequence ID" value="XM_001223508.1"/>
</dbReference>
<dbReference type="SMR" id="Q2H1Q1"/>
<dbReference type="FunCoup" id="Q2H1Q1">
    <property type="interactions" value="108"/>
</dbReference>
<dbReference type="STRING" id="306901.Q2H1Q1"/>
<dbReference type="GeneID" id="4392648"/>
<dbReference type="VEuPathDB" id="FungiDB:CHGG_04295"/>
<dbReference type="eggNOG" id="ENOG502QQX4">
    <property type="taxonomic scope" value="Eukaryota"/>
</dbReference>
<dbReference type="HOGENOM" id="CLU_001419_0_0_1"/>
<dbReference type="InParanoid" id="Q2H1Q1"/>
<dbReference type="OMA" id="WETWYRL"/>
<dbReference type="OrthoDB" id="77564at2759"/>
<dbReference type="Proteomes" id="UP000001056">
    <property type="component" value="Unassembled WGS sequence"/>
</dbReference>
<dbReference type="GO" id="GO:0000417">
    <property type="term" value="C:HIR complex"/>
    <property type="evidence" value="ECO:0007669"/>
    <property type="project" value="TreeGrafter"/>
</dbReference>
<dbReference type="GO" id="GO:0005634">
    <property type="term" value="C:nucleus"/>
    <property type="evidence" value="ECO:0007669"/>
    <property type="project" value="UniProtKB-SubCell"/>
</dbReference>
<dbReference type="GO" id="GO:0031491">
    <property type="term" value="F:nucleosome binding"/>
    <property type="evidence" value="ECO:0007669"/>
    <property type="project" value="TreeGrafter"/>
</dbReference>
<dbReference type="GO" id="GO:0006325">
    <property type="term" value="P:chromatin organization"/>
    <property type="evidence" value="ECO:0007669"/>
    <property type="project" value="InterPro"/>
</dbReference>
<dbReference type="GO" id="GO:0007059">
    <property type="term" value="P:chromosome segregation"/>
    <property type="evidence" value="ECO:0007669"/>
    <property type="project" value="UniProtKB-KW"/>
</dbReference>
<dbReference type="InterPro" id="IPR033053">
    <property type="entry name" value="Hir3/CABIN1"/>
</dbReference>
<dbReference type="PANTHER" id="PTHR15502">
    <property type="entry name" value="CALCINEURIN-BINDING PROTEIN CABIN 1-RELATED"/>
    <property type="match status" value="1"/>
</dbReference>
<dbReference type="PANTHER" id="PTHR15502:SF7">
    <property type="entry name" value="CALCINEURIN-BINDING PROTEIN CABIN-1"/>
    <property type="match status" value="1"/>
</dbReference>
<protein>
    <recommendedName>
        <fullName>Histone transcription regulator 3 homolog</fullName>
    </recommendedName>
</protein>
<name>HIR3_CHAGB</name>
<reference key="1">
    <citation type="journal article" date="2015" name="Genome Announc.">
        <title>Draft genome sequence of the cellulolytic fungus Chaetomium globosum.</title>
        <authorList>
            <person name="Cuomo C.A."/>
            <person name="Untereiner W.A."/>
            <person name="Ma L.-J."/>
            <person name="Grabherr M."/>
            <person name="Birren B.W."/>
        </authorList>
    </citation>
    <scope>NUCLEOTIDE SEQUENCE [LARGE SCALE GENOMIC DNA]</scope>
    <source>
        <strain>ATCC 6205 / CBS 148.51 / DSM 1962 / NBRC 6347 / NRRL 1970</strain>
    </source>
</reference>
<accession>Q2H1Q1</accession>
<keyword id="KW-0159">Chromosome partition</keyword>
<keyword id="KW-0539">Nucleus</keyword>
<keyword id="KW-1185">Reference proteome</keyword>
<keyword id="KW-0804">Transcription</keyword>
<keyword id="KW-0805">Transcription regulation</keyword>
<sequence length="1982" mass="220916">MAAFSAINVEPEENIDEEVDTTKDLQVDDALKLFQNALKLHAQGPQSFDQAADAYDALFESEIFKYPESKTDYERFEAGQDGTLATEPVFAQGLPPVGADVDGIGSSLPQALYLSHKNHGQFVIDRIKHKVRKSTKKREPLLKDAGVQKDAQRALDDFCVALDRDPSDAELWRKTARVAAFLKSARINRYSLEAAIELEDDPAVEEVDPPSLAEGFAGEQLKQQLQVLGDDMALTHPIMNPFVHREMPPYLARFMDPMPFLPDPTKRLAVKELRDTEIETARSVLPISIPSWSELGAAIVRFVTKEGLAGQGVLIQLPDTDEQEDVQMEVDMQLQPEEPSSQSGTPDEVVEAEEAVAEPPSEEATVEGLTSAPAPESSPTDEQASKDPNNSISTRKRSQSAAGIPDALEDDAADVKRSKRTRRRDTAVEEVMDSATFLASQLQPLQAADQNLFQTTKNLLENLGVTDQVTLGRIAEVLDSCAADDRTGKIQNQATVDLSHSITHFDEDTGAVLLSKRELPQLSLSAFLEHAKTGSQRAQEASAFDDSRGLKSFVENVNQGWNTIHDIAYKYVKALVKTYTEYKWPDQLRTAVIDVTGRLEGSIYDSFAYELELSPKDVQGETISELAGLAQTLFELHLDVYDHITDPNSTADQEAKLEAKCRVDRWADMAGEVIRLRTLEPDDPIALRFLWASVASTTMAKGTPRDHVLNCWHSLRDFLLGSAATEVNLVNNTTMPEISTAAAEREISKLTTMDFFLGLFQEDNGNPVAVVESLEPVLNPEGVYITIPATLKQADAGGDAPSDKPGKLPIAECASQELTDLWKFLKGSNTELRLLLWSRLGEAYGKIQYTTKQFSCFLRSIETVISDLESDDYLHSTDEPRRNQFMSLLKALDDLIIQSLHLALNDNSSFDIMDDDHLRSSMSALAKVSCMLHVAAMFEDETRIGMKPAPASTSDLRSFLNKLQEMQVRTWSLQYTMLKVGLNQHPELFPKPENDLADYLAAVHQVLGLRKCCKSSNKIFLKMMRVELLKQKNIDNWEDYLGQVLYDLHGLKLGVGIWEVQDHGCEPENLEKRQALQLVGKVTMLANRMSMKDLLKSDLKTTIERMQQAIGSAKSSPQMAHNLRNYSEYLKAPIHPLHLYQALTGSVDLDAVTINTPESAPAKQGWFFLLGMIALTKFKGVDLNRRQTPGATDDLRIGATFLRLQLQYTPDRWDAWFRLAECFDYELDESVLWTADKMNKERAELVKFQRNAIHSYIMALSHSYAWASDPAVLTSLEDDEEALYDMFHEFGMRMYSSSRSPFAMEPFQHAEQNRFFIEAEGAGTYKRIVHNEMTDYQVWKFAAHLFRKAMVGKPKDWKNPYMVAKCLWKMYQKPPEELDEKNRLRRPTVQAVIDALEKTIEVVSSLPKPRHGQDPILEPHYKIVSVVHKLVMRGDMEIQAAANVLQHQPYAPDRGQEISVVNAEDWEAYVVRCLKYLRDKDKSNWQHRIIMRHARILFDEDTDPSDNESSAAAKAAFNVLRESMFTKTMVMNVWKCDAERPGRHHVYTEQYIRYMVRVLDVMKDRVSLEAVLRRIRKKGADFYHFNELWQFGVLAYVKLLRRTFEVPLTEEDAFKTLSQEEFDTVGEKITAWSTTPAAEDNAALTAMKEAVEIKKLNSNLMKAGPIDDLITDCYSAIYLHVKPDLLDSDQQKLPHHPPGDPESKPDSSNPKSTSLLLHALITRDKDKDMTPSALSSLRANSEQPDRDKSERHSLAGDAPPRAASGRAGGGIRRPNILRKAEQAVQAVLRAAEMPPRSVGGATNGAAGGGKTRSRMGSVSNARAGGRAAGEGSGDESGEDEEEAEEGDVEMKDVGDDTGGGGGRRVVVERSVDAGTVKGAAGGDSSYEESDPEGEGESGDRHDHEGEGEGEMEVEQEAGQEEEEGGVGEEHGGDDEIGDDDETEEEHEEGDEGREEGAAPALPEPVMEDADATEEEDEEDEGE</sequence>
<evidence type="ECO:0000250" key="1"/>
<evidence type="ECO:0000256" key="2">
    <source>
        <dbReference type="SAM" id="MobiDB-lite"/>
    </source>
</evidence>
<evidence type="ECO:0000305" key="3"/>